<gene>
    <name evidence="1" type="primary">proS</name>
    <name type="ordered locus">EcE24377A_0201</name>
</gene>
<protein>
    <recommendedName>
        <fullName evidence="1">Proline--tRNA ligase</fullName>
        <ecNumber evidence="1">6.1.1.15</ecNumber>
    </recommendedName>
    <alternativeName>
        <fullName evidence="1">Prolyl-tRNA synthetase</fullName>
        <shortName evidence="1">ProRS</shortName>
    </alternativeName>
</protein>
<keyword id="KW-0030">Aminoacyl-tRNA synthetase</keyword>
<keyword id="KW-0067">ATP-binding</keyword>
<keyword id="KW-0963">Cytoplasm</keyword>
<keyword id="KW-0436">Ligase</keyword>
<keyword id="KW-0547">Nucleotide-binding</keyword>
<keyword id="KW-0648">Protein biosynthesis</keyword>
<keyword id="KW-1185">Reference proteome</keyword>
<name>SYP_ECO24</name>
<sequence length="572" mass="63605">MRTSQYLLSTLKETPADAEVISHQLMLRAGMIRKLASGLYTWLPTGVRVLKKVENIVREEMNNAGAIEVSMPVVQPADLWQESGRWEQYGPELLRFVDRGERPFVLGPTHEEVITDLIRNELSSYKQLPLNFYQIQTKFRDEVRPRFGVMRSREFLMKDAYSFHTSQESLQETYDAMYAAYSKIFSRIGLDFRAVQADTGSIGGSASHEFQVLAQSGEDDVVFSDTSDYAANIELAEAIAPKEPRAAATQEMTLVDTPNAKTIAELVEQFNLPIEKTVKTLLVKAVEGSSFPLVALLVRGDHELNEVKAEKLPQVASPLTFATEEEIRAVVKAGPGSLGPVNMPIPVVIDRTVAAMSDFAAGANIDGKHYFGINWDRDVATPEVADIRNVVAGDPSPDGQGTLLIKRGIEVGHIFQLGTKYSEALKASVQGEDGRNQILTMGCYGIGVTRVVAAAIEQNYDERGIVWPDAIAPFQVAILPMNMHKSFRVQELAEKLYSELRAQGIEVLLDDRKERPGVMFADMELIGIPHTIVLGDRNLDNDDIEYKYRRNGEKQLIKTGDIVEYLVKQIKG</sequence>
<reference key="1">
    <citation type="journal article" date="2008" name="J. Bacteriol.">
        <title>The pangenome structure of Escherichia coli: comparative genomic analysis of E. coli commensal and pathogenic isolates.</title>
        <authorList>
            <person name="Rasko D.A."/>
            <person name="Rosovitz M.J."/>
            <person name="Myers G.S.A."/>
            <person name="Mongodin E.F."/>
            <person name="Fricke W.F."/>
            <person name="Gajer P."/>
            <person name="Crabtree J."/>
            <person name="Sebaihia M."/>
            <person name="Thomson N.R."/>
            <person name="Chaudhuri R."/>
            <person name="Henderson I.R."/>
            <person name="Sperandio V."/>
            <person name="Ravel J."/>
        </authorList>
    </citation>
    <scope>NUCLEOTIDE SEQUENCE [LARGE SCALE GENOMIC DNA]</scope>
    <source>
        <strain>E24377A / ETEC</strain>
    </source>
</reference>
<organism>
    <name type="scientific">Escherichia coli O139:H28 (strain E24377A / ETEC)</name>
    <dbReference type="NCBI Taxonomy" id="331111"/>
    <lineage>
        <taxon>Bacteria</taxon>
        <taxon>Pseudomonadati</taxon>
        <taxon>Pseudomonadota</taxon>
        <taxon>Gammaproteobacteria</taxon>
        <taxon>Enterobacterales</taxon>
        <taxon>Enterobacteriaceae</taxon>
        <taxon>Escherichia</taxon>
    </lineage>
</organism>
<comment type="function">
    <text evidence="1">Catalyzes the attachment of proline to tRNA(Pro) in a two-step reaction: proline is first activated by ATP to form Pro-AMP and then transferred to the acceptor end of tRNA(Pro). As ProRS can inadvertently accommodate and process non-cognate amino acids such as alanine and cysteine, to avoid such errors it has two additional distinct editing activities against alanine. One activity is designated as 'pretransfer' editing and involves the tRNA(Pro)-independent hydrolysis of activated Ala-AMP. The other activity is designated 'posttransfer' editing and involves deacylation of mischarged Ala-tRNA(Pro). The misacylated Cys-tRNA(Pro) is not edited by ProRS.</text>
</comment>
<comment type="catalytic activity">
    <reaction evidence="1">
        <text>tRNA(Pro) + L-proline + ATP = L-prolyl-tRNA(Pro) + AMP + diphosphate</text>
        <dbReference type="Rhea" id="RHEA:14305"/>
        <dbReference type="Rhea" id="RHEA-COMP:9700"/>
        <dbReference type="Rhea" id="RHEA-COMP:9702"/>
        <dbReference type="ChEBI" id="CHEBI:30616"/>
        <dbReference type="ChEBI" id="CHEBI:33019"/>
        <dbReference type="ChEBI" id="CHEBI:60039"/>
        <dbReference type="ChEBI" id="CHEBI:78442"/>
        <dbReference type="ChEBI" id="CHEBI:78532"/>
        <dbReference type="ChEBI" id="CHEBI:456215"/>
        <dbReference type="EC" id="6.1.1.15"/>
    </reaction>
</comment>
<comment type="subunit">
    <text evidence="1">Homodimer.</text>
</comment>
<comment type="subcellular location">
    <subcellularLocation>
        <location evidence="1">Cytoplasm</location>
    </subcellularLocation>
</comment>
<comment type="domain">
    <text evidence="1">Consists of three domains: the N-terminal catalytic domain, the editing domain and the C-terminal anticodon-binding domain.</text>
</comment>
<comment type="similarity">
    <text evidence="1">Belongs to the class-II aminoacyl-tRNA synthetase family. ProS type 1 subfamily.</text>
</comment>
<dbReference type="EC" id="6.1.1.15" evidence="1"/>
<dbReference type="EMBL" id="CP000800">
    <property type="protein sequence ID" value="ABV17746.1"/>
    <property type="molecule type" value="Genomic_DNA"/>
</dbReference>
<dbReference type="RefSeq" id="WP_001260701.1">
    <property type="nucleotide sequence ID" value="NC_009801.1"/>
</dbReference>
<dbReference type="SMR" id="A7ZHT6"/>
<dbReference type="KEGG" id="ecw:EcE24377A_0201"/>
<dbReference type="HOGENOM" id="CLU_016739_0_0_6"/>
<dbReference type="Proteomes" id="UP000001122">
    <property type="component" value="Chromosome"/>
</dbReference>
<dbReference type="GO" id="GO:0005829">
    <property type="term" value="C:cytosol"/>
    <property type="evidence" value="ECO:0007669"/>
    <property type="project" value="TreeGrafter"/>
</dbReference>
<dbReference type="GO" id="GO:0002161">
    <property type="term" value="F:aminoacyl-tRNA deacylase activity"/>
    <property type="evidence" value="ECO:0007669"/>
    <property type="project" value="InterPro"/>
</dbReference>
<dbReference type="GO" id="GO:0005524">
    <property type="term" value="F:ATP binding"/>
    <property type="evidence" value="ECO:0007669"/>
    <property type="project" value="UniProtKB-UniRule"/>
</dbReference>
<dbReference type="GO" id="GO:0004827">
    <property type="term" value="F:proline-tRNA ligase activity"/>
    <property type="evidence" value="ECO:0007669"/>
    <property type="project" value="UniProtKB-UniRule"/>
</dbReference>
<dbReference type="GO" id="GO:0006433">
    <property type="term" value="P:prolyl-tRNA aminoacylation"/>
    <property type="evidence" value="ECO:0007669"/>
    <property type="project" value="UniProtKB-UniRule"/>
</dbReference>
<dbReference type="CDD" id="cd04334">
    <property type="entry name" value="ProRS-INS"/>
    <property type="match status" value="1"/>
</dbReference>
<dbReference type="CDD" id="cd00861">
    <property type="entry name" value="ProRS_anticodon_short"/>
    <property type="match status" value="1"/>
</dbReference>
<dbReference type="CDD" id="cd00779">
    <property type="entry name" value="ProRS_core_prok"/>
    <property type="match status" value="1"/>
</dbReference>
<dbReference type="FunFam" id="3.30.930.10:FF:000012">
    <property type="entry name" value="Proline--tRNA ligase"/>
    <property type="match status" value="1"/>
</dbReference>
<dbReference type="FunFam" id="3.30.930.10:FF:000097">
    <property type="entry name" value="Proline--tRNA ligase"/>
    <property type="match status" value="1"/>
</dbReference>
<dbReference type="FunFam" id="3.40.50.800:FF:000006">
    <property type="entry name" value="Proline--tRNA ligase"/>
    <property type="match status" value="1"/>
</dbReference>
<dbReference type="FunFam" id="3.90.960.10:FF:000001">
    <property type="entry name" value="Proline--tRNA ligase"/>
    <property type="match status" value="1"/>
</dbReference>
<dbReference type="Gene3D" id="3.40.50.800">
    <property type="entry name" value="Anticodon-binding domain"/>
    <property type="match status" value="1"/>
</dbReference>
<dbReference type="Gene3D" id="3.30.930.10">
    <property type="entry name" value="Bira Bifunctional Protein, Domain 2"/>
    <property type="match status" value="2"/>
</dbReference>
<dbReference type="Gene3D" id="3.90.960.10">
    <property type="entry name" value="YbaK/aminoacyl-tRNA synthetase-associated domain"/>
    <property type="match status" value="1"/>
</dbReference>
<dbReference type="HAMAP" id="MF_01569">
    <property type="entry name" value="Pro_tRNA_synth_type1"/>
    <property type="match status" value="1"/>
</dbReference>
<dbReference type="InterPro" id="IPR002314">
    <property type="entry name" value="aa-tRNA-synt_IIb"/>
</dbReference>
<dbReference type="InterPro" id="IPR006195">
    <property type="entry name" value="aa-tRNA-synth_II"/>
</dbReference>
<dbReference type="InterPro" id="IPR045864">
    <property type="entry name" value="aa-tRNA-synth_II/BPL/LPL"/>
</dbReference>
<dbReference type="InterPro" id="IPR004154">
    <property type="entry name" value="Anticodon-bd"/>
</dbReference>
<dbReference type="InterPro" id="IPR036621">
    <property type="entry name" value="Anticodon-bd_dom_sf"/>
</dbReference>
<dbReference type="InterPro" id="IPR002316">
    <property type="entry name" value="Pro-tRNA-ligase_IIa"/>
</dbReference>
<dbReference type="InterPro" id="IPR004500">
    <property type="entry name" value="Pro-tRNA-synth_IIa_bac-type"/>
</dbReference>
<dbReference type="InterPro" id="IPR023717">
    <property type="entry name" value="Pro-tRNA-Synthase_IIa_type1"/>
</dbReference>
<dbReference type="InterPro" id="IPR050062">
    <property type="entry name" value="Pro-tRNA_synthetase"/>
</dbReference>
<dbReference type="InterPro" id="IPR044140">
    <property type="entry name" value="ProRS_anticodon_short"/>
</dbReference>
<dbReference type="InterPro" id="IPR033730">
    <property type="entry name" value="ProRS_core_prok"/>
</dbReference>
<dbReference type="InterPro" id="IPR036754">
    <property type="entry name" value="YbaK/aa-tRNA-synt-asso_dom_sf"/>
</dbReference>
<dbReference type="InterPro" id="IPR007214">
    <property type="entry name" value="YbaK/aa-tRNA-synth-assoc-dom"/>
</dbReference>
<dbReference type="NCBIfam" id="NF006625">
    <property type="entry name" value="PRK09194.1"/>
    <property type="match status" value="1"/>
</dbReference>
<dbReference type="NCBIfam" id="TIGR00409">
    <property type="entry name" value="proS_fam_II"/>
    <property type="match status" value="1"/>
</dbReference>
<dbReference type="PANTHER" id="PTHR42753">
    <property type="entry name" value="MITOCHONDRIAL RIBOSOME PROTEIN L39/PROLYL-TRNA LIGASE FAMILY MEMBER"/>
    <property type="match status" value="1"/>
</dbReference>
<dbReference type="PANTHER" id="PTHR42753:SF2">
    <property type="entry name" value="PROLINE--TRNA LIGASE"/>
    <property type="match status" value="1"/>
</dbReference>
<dbReference type="Pfam" id="PF03129">
    <property type="entry name" value="HGTP_anticodon"/>
    <property type="match status" value="1"/>
</dbReference>
<dbReference type="Pfam" id="PF00587">
    <property type="entry name" value="tRNA-synt_2b"/>
    <property type="match status" value="1"/>
</dbReference>
<dbReference type="Pfam" id="PF04073">
    <property type="entry name" value="tRNA_edit"/>
    <property type="match status" value="1"/>
</dbReference>
<dbReference type="PIRSF" id="PIRSF001535">
    <property type="entry name" value="ProRS_1"/>
    <property type="match status" value="1"/>
</dbReference>
<dbReference type="PRINTS" id="PR01046">
    <property type="entry name" value="TRNASYNTHPRO"/>
</dbReference>
<dbReference type="SUPFAM" id="SSF52954">
    <property type="entry name" value="Class II aaRS ABD-related"/>
    <property type="match status" value="1"/>
</dbReference>
<dbReference type="SUPFAM" id="SSF55681">
    <property type="entry name" value="Class II aaRS and biotin synthetases"/>
    <property type="match status" value="1"/>
</dbReference>
<dbReference type="SUPFAM" id="SSF55826">
    <property type="entry name" value="YbaK/ProRS associated domain"/>
    <property type="match status" value="1"/>
</dbReference>
<dbReference type="PROSITE" id="PS50862">
    <property type="entry name" value="AA_TRNA_LIGASE_II"/>
    <property type="match status" value="1"/>
</dbReference>
<feature type="chain" id="PRO_1000069136" description="Proline--tRNA ligase">
    <location>
        <begin position="1"/>
        <end position="572"/>
    </location>
</feature>
<accession>A7ZHT6</accession>
<evidence type="ECO:0000255" key="1">
    <source>
        <dbReference type="HAMAP-Rule" id="MF_01569"/>
    </source>
</evidence>
<proteinExistence type="inferred from homology"/>